<reference key="1">
    <citation type="journal article" date="2001" name="Biol. Chem.">
        <title>Differential binding of urokinase and peptide antagonists to the urokinase receptor: evidence from characterization of the receptor in four primate species.</title>
        <authorList>
            <person name="Engelholm L.H."/>
            <person name="Behrendt N."/>
        </authorList>
    </citation>
    <scope>NUCLEOTIDE SEQUENCE [MRNA]</scope>
</reference>
<comment type="function">
    <text evidence="1">Acts as a receptor for urokinase plasminogen activator. Plays a role in localizing and promoting plasmin formation. Mediates the proteolysis-independent signal transduction activation effects of U-PA. It is subject to negative-feedback regulation by U-PA which cleaves it into an inactive form (By similarity).</text>
</comment>
<comment type="subunit">
    <text evidence="3 5">Monomer (Probable). Interacts (via the UPAR/Ly6 domains) with SRPX2. Interacts with MRC2. Interacts with FAP (seprase); the interaction occurs at the cell surface of invadopodia membrane. Interacts with SORL1 (via N-terminal ectodomain); this interaction decreases PLAUR internalization (By similarity). The ternary complex composed of PLAUR-PLAU-SERPINE1 also interacts with SORL1 (By similarity).</text>
</comment>
<comment type="subcellular location">
    <subcellularLocation>
        <location evidence="3">Cell membrane</location>
    </subcellularLocation>
    <subcellularLocation>
        <location evidence="3">Cell projection</location>
        <location evidence="3">Invadopodium membrane</location>
    </subcellularLocation>
    <subcellularLocation>
        <location evidence="2">Cell membrane</location>
        <topology evidence="2">Lipid-anchor</topology>
        <topology evidence="2">GPI-anchor</topology>
    </subcellularLocation>
    <text evidence="3">Colocalized with FAP (seprase) preferentially at the cell surface of invadopodia membrane in a cytoskeleton-, integrin- and vitronectin-dependent manner.</text>
</comment>
<sequence length="335" mass="37187">MGHPLLLPLLLLLHTCVPASWGLRCMQCKSNGDCRVEECALGQDLCRTTIVRMWEEGEELELVEKSCTHSEKTNRTMSYRTGLKITSLTEVVCGLDLCNQGNSGRAVTFSRSRYLECISCGSSDMSCERGRHQSLQCRSPEEQCLDMVTHWIQEGEEGRPKDDRHLRGCGYLPGCPGSNGFHNNDTFHFLKCCNTTKCNEGPILELENLPQNGHQCYSCKGNSTHGCSSEETFLIDCRGPMNQCLVATGTYEPKNQSYMVRGCVTASMCQRAHLGDAFSMNHINVFCCTESGCNHPDLDVQYRKGAAPQPGPAHLSLTITLLMTARLWGGTLLWT</sequence>
<organism>
    <name type="scientific">Chlorocebus aethiops</name>
    <name type="common">Green monkey</name>
    <name type="synonym">Cercopithecus aethiops</name>
    <dbReference type="NCBI Taxonomy" id="9534"/>
    <lineage>
        <taxon>Eukaryota</taxon>
        <taxon>Metazoa</taxon>
        <taxon>Chordata</taxon>
        <taxon>Craniata</taxon>
        <taxon>Vertebrata</taxon>
        <taxon>Euteleostomi</taxon>
        <taxon>Mammalia</taxon>
        <taxon>Eutheria</taxon>
        <taxon>Euarchontoglires</taxon>
        <taxon>Primates</taxon>
        <taxon>Haplorrhini</taxon>
        <taxon>Catarrhini</taxon>
        <taxon>Cercopithecidae</taxon>
        <taxon>Cercopithecinae</taxon>
        <taxon>Chlorocebus</taxon>
    </lineage>
</organism>
<gene>
    <name type="primary">PLAUR</name>
    <name type="synonym">UPAR</name>
</gene>
<protein>
    <recommendedName>
        <fullName>Urokinase plasminogen activator surface receptor</fullName>
        <shortName>U-PAR</shortName>
        <shortName>uPAR</shortName>
    </recommendedName>
    <cdAntigenName>CD87</cdAntigenName>
</protein>
<accession>Q9GK79</accession>
<feature type="signal peptide" evidence="1">
    <location>
        <begin position="1"/>
        <end position="22"/>
    </location>
</feature>
<feature type="chain" id="PRO_0000036088" description="Urokinase plasminogen activator surface receptor">
    <location>
        <begin position="23"/>
        <end position="305" status="uncertain"/>
    </location>
</feature>
<feature type="propeptide" id="PRO_0000036089" description="Removed in mature form" evidence="4">
    <location>
        <begin position="306" status="uncertain"/>
        <end position="335"/>
    </location>
</feature>
<feature type="domain" description="UPAR/Ly6 1">
    <location>
        <begin position="23"/>
        <end position="114"/>
    </location>
</feature>
<feature type="domain" description="UPAR/Ly6 2">
    <location>
        <begin position="115"/>
        <end position="213"/>
    </location>
</feature>
<feature type="domain" description="UPAR/Ly6 3">
    <location>
        <begin position="214"/>
        <end position="305"/>
    </location>
</feature>
<feature type="site" description="Cleavage; by U-PA" evidence="1">
    <location>
        <begin position="105"/>
        <end position="106"/>
    </location>
</feature>
<feature type="site" description="Cleavage; by U-PA" evidence="1">
    <location>
        <begin position="111"/>
        <end position="112"/>
    </location>
</feature>
<feature type="lipid moiety-binding region" description="GPI-anchor amidated glycine" evidence="4">
    <location>
        <position position="305"/>
    </location>
</feature>
<feature type="glycosylation site" description="N-linked (GlcNAc...) asparagine" evidence="4">
    <location>
        <position position="74"/>
    </location>
</feature>
<feature type="glycosylation site" description="N-linked (GlcNAc...) asparagine" evidence="4">
    <location>
        <position position="184"/>
    </location>
</feature>
<feature type="glycosylation site" description="N-linked (GlcNAc...) asparagine" evidence="4">
    <location>
        <position position="194"/>
    </location>
</feature>
<feature type="glycosylation site" description="N-linked (GlcNAc...) asparagine" evidence="4">
    <location>
        <position position="222"/>
    </location>
</feature>
<feature type="glycosylation site" description="N-linked (GlcNAc...) asparagine" evidence="4">
    <location>
        <position position="255"/>
    </location>
</feature>
<feature type="disulfide bond" evidence="3">
    <location>
        <begin position="25"/>
        <end position="46"/>
    </location>
</feature>
<feature type="disulfide bond" evidence="3">
    <location>
        <begin position="28"/>
        <end position="34"/>
    </location>
</feature>
<feature type="disulfide bond" evidence="3">
    <location>
        <begin position="39"/>
        <end position="67"/>
    </location>
</feature>
<feature type="disulfide bond" evidence="3">
    <location>
        <begin position="93"/>
        <end position="98"/>
    </location>
</feature>
<feature type="disulfide bond" evidence="3">
    <location>
        <begin position="117"/>
        <end position="144"/>
    </location>
</feature>
<feature type="disulfide bond" evidence="3">
    <location>
        <begin position="120"/>
        <end position="127"/>
    </location>
</feature>
<feature type="disulfide bond" evidence="3">
    <location>
        <begin position="137"/>
        <end position="169"/>
    </location>
</feature>
<feature type="disulfide bond" evidence="3">
    <location>
        <begin position="175"/>
        <end position="192"/>
    </location>
</feature>
<feature type="disulfide bond" evidence="3">
    <location>
        <begin position="193"/>
        <end position="198"/>
    </location>
</feature>
<feature type="disulfide bond" evidence="3">
    <location>
        <begin position="216"/>
        <end position="244"/>
    </location>
</feature>
<feature type="disulfide bond" evidence="3">
    <location>
        <begin position="219"/>
        <end position="227"/>
    </location>
</feature>
<feature type="disulfide bond" evidence="3">
    <location>
        <begin position="237"/>
        <end position="263"/>
    </location>
</feature>
<feature type="disulfide bond" evidence="3">
    <location>
        <begin position="269"/>
        <end position="287"/>
    </location>
</feature>
<feature type="disulfide bond" evidence="3">
    <location>
        <begin position="288"/>
        <end position="293"/>
    </location>
</feature>
<name>UPAR_CHLAE</name>
<keyword id="KW-0965">Cell junction</keyword>
<keyword id="KW-1003">Cell membrane</keyword>
<keyword id="KW-0966">Cell projection</keyword>
<keyword id="KW-1015">Disulfide bond</keyword>
<keyword id="KW-0325">Glycoprotein</keyword>
<keyword id="KW-0336">GPI-anchor</keyword>
<keyword id="KW-0449">Lipoprotein</keyword>
<keyword id="KW-0472">Membrane</keyword>
<keyword id="KW-0675">Receptor</keyword>
<keyword id="KW-0677">Repeat</keyword>
<keyword id="KW-0732">Signal</keyword>
<proteinExistence type="evidence at transcript level"/>
<evidence type="ECO:0000250" key="1"/>
<evidence type="ECO:0000250" key="2">
    <source>
        <dbReference type="UniProtKB" id="P49616"/>
    </source>
</evidence>
<evidence type="ECO:0000250" key="3">
    <source>
        <dbReference type="UniProtKB" id="Q03405"/>
    </source>
</evidence>
<evidence type="ECO:0000255" key="4"/>
<evidence type="ECO:0000305" key="5"/>
<dbReference type="EMBL" id="AF302072">
    <property type="protein sequence ID" value="AAG40760.1"/>
    <property type="molecule type" value="mRNA"/>
</dbReference>
<dbReference type="SMR" id="Q9GK79"/>
<dbReference type="GlyCosmos" id="Q9GK79">
    <property type="glycosylation" value="5 sites, No reported glycans"/>
</dbReference>
<dbReference type="GO" id="GO:0070161">
    <property type="term" value="C:anchoring junction"/>
    <property type="evidence" value="ECO:0007669"/>
    <property type="project" value="UniProtKB-KW"/>
</dbReference>
<dbReference type="GO" id="GO:0042995">
    <property type="term" value="C:cell projection"/>
    <property type="evidence" value="ECO:0007669"/>
    <property type="project" value="UniProtKB-SubCell"/>
</dbReference>
<dbReference type="GO" id="GO:0005886">
    <property type="term" value="C:plasma membrane"/>
    <property type="evidence" value="ECO:0007669"/>
    <property type="project" value="UniProtKB-SubCell"/>
</dbReference>
<dbReference type="GO" id="GO:0098552">
    <property type="term" value="C:side of membrane"/>
    <property type="evidence" value="ECO:0007669"/>
    <property type="project" value="UniProtKB-KW"/>
</dbReference>
<dbReference type="CDD" id="cd23556">
    <property type="entry name" value="TFP_LU_ECD_uPAR_rpt1"/>
    <property type="match status" value="1"/>
</dbReference>
<dbReference type="CDD" id="cd23557">
    <property type="entry name" value="TFP_LU_ECD_uPAR_rpt2"/>
    <property type="match status" value="1"/>
</dbReference>
<dbReference type="CDD" id="cd23558">
    <property type="entry name" value="TFP_LU_ECD_uPAR_rpt3"/>
    <property type="match status" value="1"/>
</dbReference>
<dbReference type="FunFam" id="2.10.60.10:FF:000013">
    <property type="entry name" value="Urokinase plasminogen activator surface receptor"/>
    <property type="match status" value="1"/>
</dbReference>
<dbReference type="FunFam" id="2.10.60.10:FF:000015">
    <property type="entry name" value="Urokinase plasminogen activator surface receptor"/>
    <property type="match status" value="1"/>
</dbReference>
<dbReference type="FunFam" id="2.10.60.10:FF:000019">
    <property type="entry name" value="Urokinase plasminogen activator surface receptor"/>
    <property type="match status" value="1"/>
</dbReference>
<dbReference type="Gene3D" id="2.10.60.10">
    <property type="entry name" value="CD59"/>
    <property type="match status" value="3"/>
</dbReference>
<dbReference type="InterPro" id="IPR018363">
    <property type="entry name" value="CD59_antigen_CS"/>
</dbReference>
<dbReference type="InterPro" id="IPR016054">
    <property type="entry name" value="LY6_UPA_recep-like"/>
</dbReference>
<dbReference type="InterPro" id="IPR045860">
    <property type="entry name" value="Snake_toxin-like_sf"/>
</dbReference>
<dbReference type="PANTHER" id="PTHR10624:SF6">
    <property type="entry name" value="UROKINASE PLASMINOGEN ACTIVATOR SURFACE RECEPTOR"/>
    <property type="match status" value="1"/>
</dbReference>
<dbReference type="PANTHER" id="PTHR10624">
    <property type="entry name" value="UROKINASE PLASMINOGEN ACTIVATOR SURFACE RECEPTOR-RELATED"/>
    <property type="match status" value="1"/>
</dbReference>
<dbReference type="Pfam" id="PF00021">
    <property type="entry name" value="UPAR_LY6"/>
    <property type="match status" value="3"/>
</dbReference>
<dbReference type="SMART" id="SM00134">
    <property type="entry name" value="LU"/>
    <property type="match status" value="3"/>
</dbReference>
<dbReference type="SUPFAM" id="SSF57302">
    <property type="entry name" value="Snake toxin-like"/>
    <property type="match status" value="3"/>
</dbReference>
<dbReference type="PROSITE" id="PS00983">
    <property type="entry name" value="LY6_UPAR"/>
    <property type="match status" value="3"/>
</dbReference>